<keyword id="KW-1185">Reference proteome</keyword>
<keyword id="KW-0346">Stress response</keyword>
<reference key="1">
    <citation type="journal article" date="2002" name="Nature">
        <title>Sequence and analysis of chromosome 2 of Dictyostelium discoideum.</title>
        <authorList>
            <person name="Gloeckner G."/>
            <person name="Eichinger L."/>
            <person name="Szafranski K."/>
            <person name="Pachebat J.A."/>
            <person name="Bankier A.T."/>
            <person name="Dear P.H."/>
            <person name="Lehmann R."/>
            <person name="Baumgart C."/>
            <person name="Parra G."/>
            <person name="Abril J.F."/>
            <person name="Guigo R."/>
            <person name="Kumpf K."/>
            <person name="Tunggal B."/>
            <person name="Cox E.C."/>
            <person name="Quail M.A."/>
            <person name="Platzer M."/>
            <person name="Rosenthal A."/>
            <person name="Noegel A.A."/>
        </authorList>
    </citation>
    <scope>NUCLEOTIDE SEQUENCE [LARGE SCALE GENOMIC DNA]</scope>
    <source>
        <strain>AX4</strain>
    </source>
</reference>
<reference key="2">
    <citation type="journal article" date="2005" name="Nature">
        <title>The genome of the social amoeba Dictyostelium discoideum.</title>
        <authorList>
            <person name="Eichinger L."/>
            <person name="Pachebat J.A."/>
            <person name="Gloeckner G."/>
            <person name="Rajandream M.A."/>
            <person name="Sucgang R."/>
            <person name="Berriman M."/>
            <person name="Song J."/>
            <person name="Olsen R."/>
            <person name="Szafranski K."/>
            <person name="Xu Q."/>
            <person name="Tunggal B."/>
            <person name="Kummerfeld S."/>
            <person name="Madera M."/>
            <person name="Konfortov B.A."/>
            <person name="Rivero F."/>
            <person name="Bankier A.T."/>
            <person name="Lehmann R."/>
            <person name="Hamlin N."/>
            <person name="Davies R."/>
            <person name="Gaudet P."/>
            <person name="Fey P."/>
            <person name="Pilcher K."/>
            <person name="Chen G."/>
            <person name="Saunders D."/>
            <person name="Sodergren E.J."/>
            <person name="Davis P."/>
            <person name="Kerhornou A."/>
            <person name="Nie X."/>
            <person name="Hall N."/>
            <person name="Anjard C."/>
            <person name="Hemphill L."/>
            <person name="Bason N."/>
            <person name="Farbrother P."/>
            <person name="Desany B."/>
            <person name="Just E."/>
            <person name="Morio T."/>
            <person name="Rost R."/>
            <person name="Churcher C.M."/>
            <person name="Cooper J."/>
            <person name="Haydock S."/>
            <person name="van Driessche N."/>
            <person name="Cronin A."/>
            <person name="Goodhead I."/>
            <person name="Muzny D.M."/>
            <person name="Mourier T."/>
            <person name="Pain A."/>
            <person name="Lu M."/>
            <person name="Harper D."/>
            <person name="Lindsay R."/>
            <person name="Hauser H."/>
            <person name="James K.D."/>
            <person name="Quiles M."/>
            <person name="Madan Babu M."/>
            <person name="Saito T."/>
            <person name="Buchrieser C."/>
            <person name="Wardroper A."/>
            <person name="Felder M."/>
            <person name="Thangavelu M."/>
            <person name="Johnson D."/>
            <person name="Knights A."/>
            <person name="Loulseged H."/>
            <person name="Mungall K.L."/>
            <person name="Oliver K."/>
            <person name="Price C."/>
            <person name="Quail M.A."/>
            <person name="Urushihara H."/>
            <person name="Hernandez J."/>
            <person name="Rabbinowitsch E."/>
            <person name="Steffen D."/>
            <person name="Sanders M."/>
            <person name="Ma J."/>
            <person name="Kohara Y."/>
            <person name="Sharp S."/>
            <person name="Simmonds M.N."/>
            <person name="Spiegler S."/>
            <person name="Tivey A."/>
            <person name="Sugano S."/>
            <person name="White B."/>
            <person name="Walker D."/>
            <person name="Woodward J.R."/>
            <person name="Winckler T."/>
            <person name="Tanaka Y."/>
            <person name="Shaulsky G."/>
            <person name="Schleicher M."/>
            <person name="Weinstock G.M."/>
            <person name="Rosenthal A."/>
            <person name="Cox E.C."/>
            <person name="Chisholm R.L."/>
            <person name="Gibbs R.A."/>
            <person name="Loomis W.F."/>
            <person name="Platzer M."/>
            <person name="Kay R.R."/>
            <person name="Williams J.G."/>
            <person name="Dear P.H."/>
            <person name="Noegel A.A."/>
            <person name="Barrell B.G."/>
            <person name="Kuspa A."/>
        </authorList>
    </citation>
    <scope>NUCLEOTIDE SEQUENCE [LARGE SCALE GENOMIC DNA]</scope>
    <source>
        <strain>AX4</strain>
    </source>
</reference>
<evidence type="ECO:0000255" key="1">
    <source>
        <dbReference type="PROSITE-ProRule" id="PRU00285"/>
    </source>
</evidence>
<comment type="similarity">
    <text evidence="1">Belongs to the small heat shock protein (HSP20) family.</text>
</comment>
<protein>
    <recommendedName>
        <fullName>Small heat shock protein hspG1</fullName>
    </recommendedName>
</protein>
<proteinExistence type="inferred from homology"/>
<name>HSPG1_DICDI</name>
<dbReference type="EMBL" id="AAFI02000013">
    <property type="protein sequence ID" value="EAL69820.1"/>
    <property type="molecule type" value="Genomic_DNA"/>
</dbReference>
<dbReference type="RefSeq" id="XP_643793.1">
    <property type="nucleotide sequence ID" value="XM_638701.1"/>
</dbReference>
<dbReference type="SMR" id="Q86I25"/>
<dbReference type="STRING" id="44689.Q86I25"/>
<dbReference type="PaxDb" id="44689-DDB0232119"/>
<dbReference type="EnsemblProtists" id="EAL69820">
    <property type="protein sequence ID" value="EAL69820"/>
    <property type="gene ID" value="DDB_G0275079"/>
</dbReference>
<dbReference type="GeneID" id="8619838"/>
<dbReference type="KEGG" id="ddi:DDB_G0275079"/>
<dbReference type="dictyBase" id="DDB_G0275079">
    <property type="gene designation" value="hspG1"/>
</dbReference>
<dbReference type="VEuPathDB" id="AmoebaDB:DDB_G0275079"/>
<dbReference type="eggNOG" id="KOG0710">
    <property type="taxonomic scope" value="Eukaryota"/>
</dbReference>
<dbReference type="HOGENOM" id="CLU_1328489_0_0_1"/>
<dbReference type="InParanoid" id="Q86I25"/>
<dbReference type="OMA" id="ENKKEFR"/>
<dbReference type="PhylomeDB" id="Q86I25"/>
<dbReference type="PRO" id="PR:Q86I25"/>
<dbReference type="Proteomes" id="UP000002195">
    <property type="component" value="Chromosome 2"/>
</dbReference>
<dbReference type="CDD" id="cd06464">
    <property type="entry name" value="ACD_sHsps-like"/>
    <property type="match status" value="1"/>
</dbReference>
<dbReference type="Gene3D" id="2.60.40.790">
    <property type="match status" value="1"/>
</dbReference>
<dbReference type="InterPro" id="IPR002068">
    <property type="entry name" value="A-crystallin/Hsp20_dom"/>
</dbReference>
<dbReference type="InterPro" id="IPR008978">
    <property type="entry name" value="HSP20-like_chaperone"/>
</dbReference>
<dbReference type="InterPro" id="IPR051779">
    <property type="entry name" value="HspG1-11-like"/>
</dbReference>
<dbReference type="PANTHER" id="PTHR46827">
    <property type="entry name" value="HEAT SHOCK PROTEIN DDB_G0288861-RELATED"/>
    <property type="match status" value="1"/>
</dbReference>
<dbReference type="PANTHER" id="PTHR46827:SF1">
    <property type="entry name" value="HEAT SHOCK PROTEIN DDB_G0288861-RELATED"/>
    <property type="match status" value="1"/>
</dbReference>
<dbReference type="Pfam" id="PF00011">
    <property type="entry name" value="HSP20"/>
    <property type="match status" value="1"/>
</dbReference>
<dbReference type="SUPFAM" id="SSF49764">
    <property type="entry name" value="HSP20-like chaperones"/>
    <property type="match status" value="1"/>
</dbReference>
<dbReference type="PROSITE" id="PS01031">
    <property type="entry name" value="SHSP"/>
    <property type="match status" value="1"/>
</dbReference>
<accession>Q86I25</accession>
<accession>Q554B8</accession>
<sequence length="182" mass="21081">MATIFDILNSINNKNNNHSNYYSCKRLKSNNNNNNNNFRNNSIKRIDIIPSMDVTITDNNIIIETELAGISKDNIEIDIKDSILTIQGEKKINNNYKQQQQQHSDKTKTNNELPLIEENKKEFRKYLSERSFGNFKRCLDLTSILYQLDLSTIKSNFENGLLIITINKKSDLSNSSFKININ</sequence>
<feature type="chain" id="PRO_0000363893" description="Small heat shock protein hspG1">
    <location>
        <begin position="1"/>
        <end position="182"/>
    </location>
</feature>
<feature type="domain" description="sHSP" evidence="1">
    <location>
        <begin position="43"/>
        <end position="182"/>
    </location>
</feature>
<organism>
    <name type="scientific">Dictyostelium discoideum</name>
    <name type="common">Social amoeba</name>
    <dbReference type="NCBI Taxonomy" id="44689"/>
    <lineage>
        <taxon>Eukaryota</taxon>
        <taxon>Amoebozoa</taxon>
        <taxon>Evosea</taxon>
        <taxon>Eumycetozoa</taxon>
        <taxon>Dictyostelia</taxon>
        <taxon>Dictyosteliales</taxon>
        <taxon>Dictyosteliaceae</taxon>
        <taxon>Dictyostelium</taxon>
    </lineage>
</organism>
<gene>
    <name type="primary">hspG1</name>
    <name type="ORF">DDB_G0275079</name>
</gene>